<protein>
    <recommendedName>
        <fullName evidence="7">Salivary protein 15 Iric-2</fullName>
        <shortName evidence="7">Salp15 Iric-2</shortName>
    </recommendedName>
    <alternativeName>
        <fullName evidence="8">Salp15-like</fullName>
    </alternativeName>
</protein>
<evidence type="ECO:0000250" key="1">
    <source>
        <dbReference type="UniProtKB" id="A8CZZ0"/>
    </source>
</evidence>
<evidence type="ECO:0000250" key="2">
    <source>
        <dbReference type="UniProtKB" id="Q95WZ4"/>
    </source>
</evidence>
<evidence type="ECO:0000255" key="3"/>
<evidence type="ECO:0000255" key="4">
    <source>
        <dbReference type="PROSITE-ProRule" id="PRU00498"/>
    </source>
</evidence>
<evidence type="ECO:0000269" key="5">
    <source>
    </source>
</evidence>
<evidence type="ECO:0000269" key="6">
    <source>
    </source>
</evidence>
<evidence type="ECO:0000303" key="7">
    <source>
    </source>
</evidence>
<evidence type="ECO:0000305" key="8"/>
<evidence type="ECO:0000305" key="9">
    <source>
    </source>
</evidence>
<evidence type="ECO:0000312" key="10">
    <source>
        <dbReference type="EMBL" id="ABU93614.1"/>
    </source>
</evidence>
<keyword id="KW-0325">Glycoprotein</keyword>
<keyword id="KW-0964">Secreted</keyword>
<keyword id="KW-0732">Signal</keyword>
<comment type="function">
    <text evidence="1 2 6">Salivary tick protein that downregulates host immune system by binding to both dendritic cells, and CD4(+) T cells. Specifically binds to the CD4 coreceptor on T cells. This interaction prevents the activation of the Src kinase, Lck, and its downstream substrate Zap-70, and results in deficient activation of PLCgamma1, the repression of calcium fluxes triggered by T-cell antigen receptor (TCR) ligation, and a subsequent reduction in interleukin-2 production. This salivary protein also binds to DC-SIGN (CD209) on dendritic cells (DC) and activates the Raf-1 kinase/MEK signaling pathway that results in down-regulating expression of pro-inflammatory cytokines. Furthermore, it inhibits T cell proliferation induced by DCs (By similarity). In addition, it inhibits in vitro keratinocyte inflammation induced by Borrelia burgdorferi or by the major outer surface protein (OspC) of Borrelia (By similarity). In addition, it downregulates chemokines and monocyte chemoattractant protein 1, as well as several antimicrobial peptides such as defensins, cathelicidin, psoriasin, and RNase 7 (By similarity). Apart from its immunomodulatory activities, it is also associated with protection of Borrelia spirochetes from antibody-mediated killing through its binding to OspC (By similarity) (PubMed:33401196). In vivo, tests on different immune disease animal models show promising therapeutic results, e.g., in inhibiting HIV infection, experimental autoimmune encephalomyelitis, transplantation rejection, and asthma (By similarity).</text>
</comment>
<comment type="subunit">
    <text evidence="2 6">Interacts with host CD4 (By similarity). Interacts with host DC-SIGN (CD209) (By similarity). Interacts with Borrelia outer surface protein C (OspC) (PubMed:33401196).</text>
</comment>
<comment type="subcellular location">
    <subcellularLocation>
        <location evidence="9">Secreted</location>
    </subcellularLocation>
</comment>
<comment type="tissue specificity">
    <text evidence="5">Expressed in salivary glands (PubMed:17896872). Detected in fed adult female (PubMed:17896872).</text>
</comment>
<comment type="induction">
    <text evidence="2 9">By feeding (Probable). By the presence of Borrelia burgdorferi (By similarity).</text>
</comment>
<comment type="similarity">
    <text evidence="8">Belongs to the salp15 family.</text>
</comment>
<sequence length="136" mass="15219">MESFVAMKVVCIVLLFVIAAEAASTGKNPVGDAPNGKKNNITFNFPPYVPNHHAFASSLWKLCEESTPKPEMKIVDSRTTYTRRINDLQVNFKDCTFLCKRRFDNVTLDLPKNTPCGPKNQTCENKDQCVPHIPGC</sequence>
<dbReference type="EMBL" id="EU128527">
    <property type="protein sequence ID" value="ABU93614.1"/>
    <property type="molecule type" value="mRNA"/>
</dbReference>
<dbReference type="GO" id="GO:0005576">
    <property type="term" value="C:extracellular region"/>
    <property type="evidence" value="ECO:0007669"/>
    <property type="project" value="UniProtKB-SubCell"/>
</dbReference>
<dbReference type="InterPro" id="IPR021971">
    <property type="entry name" value="Salp15"/>
</dbReference>
<dbReference type="Pfam" id="PF12115">
    <property type="entry name" value="Salp15"/>
    <property type="match status" value="1"/>
</dbReference>
<proteinExistence type="evidence at protein level"/>
<organism>
    <name type="scientific">Ixodes ricinus</name>
    <name type="common">Common tick</name>
    <name type="synonym">Acarus ricinus</name>
    <dbReference type="NCBI Taxonomy" id="34613"/>
    <lineage>
        <taxon>Eukaryota</taxon>
        <taxon>Metazoa</taxon>
        <taxon>Ecdysozoa</taxon>
        <taxon>Arthropoda</taxon>
        <taxon>Chelicerata</taxon>
        <taxon>Arachnida</taxon>
        <taxon>Acari</taxon>
        <taxon>Parasitiformes</taxon>
        <taxon>Ixodida</taxon>
        <taxon>Ixodoidea</taxon>
        <taxon>Ixodidae</taxon>
        <taxon>Ixodinae</taxon>
        <taxon>Ixodes</taxon>
    </lineage>
</organism>
<reference evidence="10" key="1">
    <citation type="journal article" date="2007" name="Vector Borne Zoonotic Dis.">
        <title>Identification of Salp15 homologues in Ixodes ricinus ticks.</title>
        <authorList>
            <person name="Hovius J.W."/>
            <person name="Ramamoorthi N."/>
            <person name="Veer C.V."/>
            <person name="De Groot K.A."/>
            <person name="Nijhof A.M."/>
            <person name="Jongejan F."/>
            <person name="Van Dam A.P."/>
            <person name="Fikrig E."/>
        </authorList>
    </citation>
    <scope>NUCLEOTIDE SEQUENCE [MRNA]</scope>
    <scope>INDUCTION</scope>
    <scope>TISSUE SPECIFICITY</scope>
    <source>
        <tissue>Salivary gland</tissue>
    </source>
</reference>
<reference key="2">
    <citation type="journal article" date="2021" name="Ticks Tick Borne Dis.">
        <title>Strong interactions between Salp15 homologues from the tick I. ricinus and distinct types of the outer surface OspC protein from Borrelia.</title>
        <authorList>
            <person name="Bierwagen P."/>
            <person name="Sliwiak J."/>
            <person name="Jaskolski M."/>
            <person name="Urbanowicz A."/>
        </authorList>
    </citation>
    <scope>FUNCTION</scope>
    <scope>INTERACTION WITH BORRELIA OUTER SURFACE PROTEIN C</scope>
    <scope>RECOMBINANT EXPRESSION</scope>
</reference>
<feature type="signal peptide" evidence="3">
    <location>
        <begin position="1"/>
        <end position="22"/>
    </location>
</feature>
<feature type="chain" id="PRO_5002719766" description="Salivary protein 15 Iric-2">
    <location>
        <begin position="23"/>
        <end position="136"/>
    </location>
</feature>
<feature type="region of interest" description="CD4-binding" evidence="2">
    <location>
        <begin position="117"/>
        <end position="136"/>
    </location>
</feature>
<feature type="glycosylation site" description="N-linked (GlcNAc...) asparagine" evidence="4">
    <location>
        <position position="105"/>
    </location>
</feature>
<name>SP152_IXORI</name>
<accession>A8CZZ1</accession>